<sequence length="314" mass="35518">MKKLKIVFAGTEYFSAEHLHALITSSHDVISVITQPDRYSGRGQKITFSPVKILSLNNGIPIFQPENLNDTDFQNKLLKLNADIMTVVSYGKIIPKKILNMFSKGCINVHASLLPRWRGATPIQSSILHGDKKTGISIIQMNDEIDSGNIMHSITCSISSKDTTKTLSLKLIKIGIEALLEVLEKIILNTVIYKKQNEKNVILSKKIYKKDALLDWNLSAEKLERLIRAFNPWPICYFLSQNKNIKVWQSEVIPITQNNRSVGEIISYNKNGIQINTSHQILNIKKLQFPGKKIIDVKNVIISKKKLFKIGTIL</sequence>
<feature type="chain" id="PRO_1000190012" description="Methionyl-tRNA formyltransferase">
    <location>
        <begin position="1"/>
        <end position="314"/>
    </location>
</feature>
<feature type="binding site" evidence="1">
    <location>
        <begin position="112"/>
        <end position="115"/>
    </location>
    <ligand>
        <name>(6S)-5,6,7,8-tetrahydrofolate</name>
        <dbReference type="ChEBI" id="CHEBI:57453"/>
    </ligand>
</feature>
<proteinExistence type="inferred from homology"/>
<dbReference type="EC" id="2.1.2.9" evidence="1"/>
<dbReference type="EMBL" id="CP001158">
    <property type="protein sequence ID" value="ACL30287.1"/>
    <property type="molecule type" value="Genomic_DNA"/>
</dbReference>
<dbReference type="RefSeq" id="WP_009874448.1">
    <property type="nucleotide sequence ID" value="NC_011834.1"/>
</dbReference>
<dbReference type="SMR" id="B8D822"/>
<dbReference type="KEGG" id="bau:BUAPTUC7_491"/>
<dbReference type="HOGENOM" id="CLU_033347_1_2_6"/>
<dbReference type="GO" id="GO:0005829">
    <property type="term" value="C:cytosol"/>
    <property type="evidence" value="ECO:0007669"/>
    <property type="project" value="TreeGrafter"/>
</dbReference>
<dbReference type="GO" id="GO:0004479">
    <property type="term" value="F:methionyl-tRNA formyltransferase activity"/>
    <property type="evidence" value="ECO:0007669"/>
    <property type="project" value="UniProtKB-UniRule"/>
</dbReference>
<dbReference type="CDD" id="cd08646">
    <property type="entry name" value="FMT_core_Met-tRNA-FMT_N"/>
    <property type="match status" value="1"/>
</dbReference>
<dbReference type="CDD" id="cd08704">
    <property type="entry name" value="Met_tRNA_FMT_C"/>
    <property type="match status" value="1"/>
</dbReference>
<dbReference type="Gene3D" id="3.10.25.10">
    <property type="entry name" value="Formyl transferase, C-terminal domain"/>
    <property type="match status" value="1"/>
</dbReference>
<dbReference type="Gene3D" id="3.40.50.170">
    <property type="entry name" value="Formyl transferase, N-terminal domain"/>
    <property type="match status" value="1"/>
</dbReference>
<dbReference type="HAMAP" id="MF_00182">
    <property type="entry name" value="Formyl_trans"/>
    <property type="match status" value="1"/>
</dbReference>
<dbReference type="InterPro" id="IPR005794">
    <property type="entry name" value="Fmt"/>
</dbReference>
<dbReference type="InterPro" id="IPR005793">
    <property type="entry name" value="Formyl_trans_C"/>
</dbReference>
<dbReference type="InterPro" id="IPR037022">
    <property type="entry name" value="Formyl_trans_C_sf"/>
</dbReference>
<dbReference type="InterPro" id="IPR002376">
    <property type="entry name" value="Formyl_transf_N"/>
</dbReference>
<dbReference type="InterPro" id="IPR036477">
    <property type="entry name" value="Formyl_transf_N_sf"/>
</dbReference>
<dbReference type="InterPro" id="IPR011034">
    <property type="entry name" value="Formyl_transferase-like_C_sf"/>
</dbReference>
<dbReference type="InterPro" id="IPR044135">
    <property type="entry name" value="Met-tRNA-FMT_C"/>
</dbReference>
<dbReference type="InterPro" id="IPR041711">
    <property type="entry name" value="Met-tRNA-FMT_N"/>
</dbReference>
<dbReference type="NCBIfam" id="TIGR00460">
    <property type="entry name" value="fmt"/>
    <property type="match status" value="1"/>
</dbReference>
<dbReference type="PANTHER" id="PTHR11138">
    <property type="entry name" value="METHIONYL-TRNA FORMYLTRANSFERASE"/>
    <property type="match status" value="1"/>
</dbReference>
<dbReference type="PANTHER" id="PTHR11138:SF5">
    <property type="entry name" value="METHIONYL-TRNA FORMYLTRANSFERASE, MITOCHONDRIAL"/>
    <property type="match status" value="1"/>
</dbReference>
<dbReference type="Pfam" id="PF02911">
    <property type="entry name" value="Formyl_trans_C"/>
    <property type="match status" value="1"/>
</dbReference>
<dbReference type="Pfam" id="PF00551">
    <property type="entry name" value="Formyl_trans_N"/>
    <property type="match status" value="1"/>
</dbReference>
<dbReference type="SUPFAM" id="SSF50486">
    <property type="entry name" value="FMT C-terminal domain-like"/>
    <property type="match status" value="1"/>
</dbReference>
<dbReference type="SUPFAM" id="SSF53328">
    <property type="entry name" value="Formyltransferase"/>
    <property type="match status" value="1"/>
</dbReference>
<protein>
    <recommendedName>
        <fullName evidence="1">Methionyl-tRNA formyltransferase</fullName>
        <ecNumber evidence="1">2.1.2.9</ecNumber>
    </recommendedName>
</protein>
<evidence type="ECO:0000255" key="1">
    <source>
        <dbReference type="HAMAP-Rule" id="MF_00182"/>
    </source>
</evidence>
<organism>
    <name type="scientific">Buchnera aphidicola subsp. Acyrthosiphon pisum (strain Tuc7)</name>
    <dbReference type="NCBI Taxonomy" id="561501"/>
    <lineage>
        <taxon>Bacteria</taxon>
        <taxon>Pseudomonadati</taxon>
        <taxon>Pseudomonadota</taxon>
        <taxon>Gammaproteobacteria</taxon>
        <taxon>Enterobacterales</taxon>
        <taxon>Erwiniaceae</taxon>
        <taxon>Buchnera</taxon>
    </lineage>
</organism>
<gene>
    <name evidence="1" type="primary">fmt</name>
    <name type="ordered locus">BUAPTUC7_491</name>
</gene>
<comment type="function">
    <text evidence="1">Attaches a formyl group to the free amino group of methionyl-tRNA(fMet). The formyl group appears to play a dual role in the initiator identity of N-formylmethionyl-tRNA by promoting its recognition by IF2 and preventing the misappropriation of this tRNA by the elongation apparatus.</text>
</comment>
<comment type="catalytic activity">
    <reaction evidence="1">
        <text>L-methionyl-tRNA(fMet) + (6R)-10-formyltetrahydrofolate = N-formyl-L-methionyl-tRNA(fMet) + (6S)-5,6,7,8-tetrahydrofolate + H(+)</text>
        <dbReference type="Rhea" id="RHEA:24380"/>
        <dbReference type="Rhea" id="RHEA-COMP:9952"/>
        <dbReference type="Rhea" id="RHEA-COMP:9953"/>
        <dbReference type="ChEBI" id="CHEBI:15378"/>
        <dbReference type="ChEBI" id="CHEBI:57453"/>
        <dbReference type="ChEBI" id="CHEBI:78530"/>
        <dbReference type="ChEBI" id="CHEBI:78844"/>
        <dbReference type="ChEBI" id="CHEBI:195366"/>
        <dbReference type="EC" id="2.1.2.9"/>
    </reaction>
</comment>
<comment type="similarity">
    <text evidence="1">Belongs to the Fmt family.</text>
</comment>
<keyword id="KW-0648">Protein biosynthesis</keyword>
<keyword id="KW-0808">Transferase</keyword>
<accession>B8D822</accession>
<reference key="1">
    <citation type="journal article" date="2009" name="Science">
        <title>The dynamics and time scale of ongoing genomic erosion in symbiotic bacteria.</title>
        <authorList>
            <person name="Moran N.A."/>
            <person name="McLaughlin H.J."/>
            <person name="Sorek R."/>
        </authorList>
    </citation>
    <scope>NUCLEOTIDE SEQUENCE [LARGE SCALE GENOMIC DNA]</scope>
    <source>
        <strain>Tuc7</strain>
    </source>
</reference>
<name>FMT_BUCAT</name>